<organism>
    <name type="scientific">Saccharum hybrid</name>
    <name type="common">Sugarcane</name>
    <dbReference type="NCBI Taxonomy" id="15819"/>
    <lineage>
        <taxon>Eukaryota</taxon>
        <taxon>Viridiplantae</taxon>
        <taxon>Streptophyta</taxon>
        <taxon>Embryophyta</taxon>
        <taxon>Tracheophyta</taxon>
        <taxon>Spermatophyta</taxon>
        <taxon>Magnoliopsida</taxon>
        <taxon>Liliopsida</taxon>
        <taxon>Poales</taxon>
        <taxon>Poaceae</taxon>
        <taxon>PACMAD clade</taxon>
        <taxon>Panicoideae</taxon>
        <taxon>Andropogonodae</taxon>
        <taxon>Andropogoneae</taxon>
        <taxon>Saccharinae</taxon>
        <taxon>Saccharum</taxon>
    </lineage>
</organism>
<geneLocation type="chloroplast"/>
<comment type="subunit">
    <text evidence="1">Part of the 50S ribosomal subunit.</text>
</comment>
<comment type="subcellular location">
    <subcellularLocation>
        <location>Plastid</location>
        <location>Chloroplast</location>
    </subcellularLocation>
</comment>
<comment type="similarity">
    <text evidence="1">Belongs to the universal ribosomal protein uL16 family.</text>
</comment>
<keyword id="KW-0150">Chloroplast</keyword>
<keyword id="KW-0934">Plastid</keyword>
<keyword id="KW-0687">Ribonucleoprotein</keyword>
<keyword id="KW-0689">Ribosomal protein</keyword>
<proteinExistence type="inferred from homology"/>
<protein>
    <recommendedName>
        <fullName evidence="1">Large ribosomal subunit protein uL16c</fullName>
    </recommendedName>
    <alternativeName>
        <fullName evidence="2">50S ribosomal protein L16, chloroplastic</fullName>
    </alternativeName>
</protein>
<evidence type="ECO:0000255" key="1">
    <source>
        <dbReference type="HAMAP-Rule" id="MF_01342"/>
    </source>
</evidence>
<evidence type="ECO:0000305" key="2"/>
<dbReference type="EMBL" id="AE009947">
    <property type="protein sequence ID" value="AAT44632.1"/>
    <property type="molecule type" value="Genomic_DNA"/>
</dbReference>
<dbReference type="SMR" id="Q6L3G1"/>
<dbReference type="GO" id="GO:0009507">
    <property type="term" value="C:chloroplast"/>
    <property type="evidence" value="ECO:0007669"/>
    <property type="project" value="UniProtKB-SubCell"/>
</dbReference>
<dbReference type="GO" id="GO:0005762">
    <property type="term" value="C:mitochondrial large ribosomal subunit"/>
    <property type="evidence" value="ECO:0007669"/>
    <property type="project" value="TreeGrafter"/>
</dbReference>
<dbReference type="GO" id="GO:0019843">
    <property type="term" value="F:rRNA binding"/>
    <property type="evidence" value="ECO:0007669"/>
    <property type="project" value="InterPro"/>
</dbReference>
<dbReference type="GO" id="GO:0003735">
    <property type="term" value="F:structural constituent of ribosome"/>
    <property type="evidence" value="ECO:0007669"/>
    <property type="project" value="InterPro"/>
</dbReference>
<dbReference type="GO" id="GO:0032543">
    <property type="term" value="P:mitochondrial translation"/>
    <property type="evidence" value="ECO:0007669"/>
    <property type="project" value="TreeGrafter"/>
</dbReference>
<dbReference type="CDD" id="cd01433">
    <property type="entry name" value="Ribosomal_L16_L10e"/>
    <property type="match status" value="1"/>
</dbReference>
<dbReference type="FunFam" id="3.90.1170.10:FF:000001">
    <property type="entry name" value="50S ribosomal protein L16"/>
    <property type="match status" value="1"/>
</dbReference>
<dbReference type="Gene3D" id="3.90.1170.10">
    <property type="entry name" value="Ribosomal protein L10e/L16"/>
    <property type="match status" value="1"/>
</dbReference>
<dbReference type="HAMAP" id="MF_01342">
    <property type="entry name" value="Ribosomal_uL16"/>
    <property type="match status" value="1"/>
</dbReference>
<dbReference type="InterPro" id="IPR047873">
    <property type="entry name" value="Ribosomal_uL16"/>
</dbReference>
<dbReference type="InterPro" id="IPR000114">
    <property type="entry name" value="Ribosomal_uL16_bact-type"/>
</dbReference>
<dbReference type="InterPro" id="IPR020798">
    <property type="entry name" value="Ribosomal_uL16_CS"/>
</dbReference>
<dbReference type="InterPro" id="IPR016180">
    <property type="entry name" value="Ribosomal_uL16_dom"/>
</dbReference>
<dbReference type="InterPro" id="IPR036920">
    <property type="entry name" value="Ribosomal_uL16_sf"/>
</dbReference>
<dbReference type="NCBIfam" id="TIGR01164">
    <property type="entry name" value="rplP_bact"/>
    <property type="match status" value="1"/>
</dbReference>
<dbReference type="PANTHER" id="PTHR12220">
    <property type="entry name" value="50S/60S RIBOSOMAL PROTEIN L16"/>
    <property type="match status" value="1"/>
</dbReference>
<dbReference type="PANTHER" id="PTHR12220:SF13">
    <property type="entry name" value="LARGE RIBOSOMAL SUBUNIT PROTEIN UL16M"/>
    <property type="match status" value="1"/>
</dbReference>
<dbReference type="Pfam" id="PF00252">
    <property type="entry name" value="Ribosomal_L16"/>
    <property type="match status" value="1"/>
</dbReference>
<dbReference type="PRINTS" id="PR00060">
    <property type="entry name" value="RIBOSOMALL16"/>
</dbReference>
<dbReference type="SUPFAM" id="SSF54686">
    <property type="entry name" value="Ribosomal protein L16p/L10e"/>
    <property type="match status" value="1"/>
</dbReference>
<dbReference type="PROSITE" id="PS00586">
    <property type="entry name" value="RIBOSOMAL_L16_1"/>
    <property type="match status" value="1"/>
</dbReference>
<dbReference type="PROSITE" id="PS00701">
    <property type="entry name" value="RIBOSOMAL_L16_2"/>
    <property type="match status" value="1"/>
</dbReference>
<sequence length="136" mass="15517">MLSPKRTRFRKQHRGRMNGKSCRGNHICFGRYALQVLEPAWITARQIEAGRRAMTRYARRGGKIWVRIFPDKPVTIRPTETRMGSGKGSPEYWVAVVKPGRILYEMSGVSETVARAAISIAASKMPIRSQFLRLEI</sequence>
<gene>
    <name evidence="1" type="primary">rpl16</name>
    <name type="ordered locus">PS002</name>
</gene>
<reference key="1">
    <citation type="journal article" date="2004" name="Curr. Genet.">
        <title>Structural features and transcript-editing analysis of sugarcane (Saccharum officinarum L.) chloroplast genome.</title>
        <authorList>
            <person name="Calsa T. Jr."/>
            <person name="Carraro D.M."/>
            <person name="Benatti M.R."/>
            <person name="Barbosa A.C."/>
            <person name="Kitajima J.P."/>
            <person name="Carrer H."/>
        </authorList>
    </citation>
    <scope>NUCLEOTIDE SEQUENCE [LARGE SCALE GENOMIC DNA]</scope>
    <source>
        <strain>cv. SP-80-3280</strain>
    </source>
</reference>
<accession>Q6L3G1</accession>
<name>RK16_SACHY</name>
<feature type="chain" id="PRO_0000062310" description="Large ribosomal subunit protein uL16c">
    <location>
        <begin position="1"/>
        <end position="136"/>
    </location>
</feature>